<name>GUN25_ARATH</name>
<feature type="chain" id="PRO_0000249277" description="Endoglucanase 25">
    <location>
        <begin position="1"/>
        <end position="621"/>
    </location>
</feature>
<feature type="topological domain" description="Cytoplasmic" evidence="1">
    <location>
        <begin position="1"/>
        <end position="70"/>
    </location>
</feature>
<feature type="transmembrane region" description="Helical; Signal-anchor for type II membrane protein" evidence="1">
    <location>
        <begin position="71"/>
        <end position="91"/>
    </location>
</feature>
<feature type="topological domain" description="Extracellular" evidence="1">
    <location>
        <begin position="92"/>
        <end position="621"/>
    </location>
</feature>
<feature type="region of interest" description="Disordered" evidence="5">
    <location>
        <begin position="1"/>
        <end position="26"/>
    </location>
</feature>
<feature type="region of interest" description="Polarized targeting signal 1 (PTS1)">
    <location>
        <begin position="48"/>
        <end position="49"/>
    </location>
</feature>
<feature type="region of interest" description="Polarized targeting signal 2 (PTS2)">
    <location>
        <begin position="59"/>
        <end position="62"/>
    </location>
</feature>
<feature type="active site" description="Nucleophile" evidence="4">
    <location>
        <position position="165"/>
    </location>
</feature>
<feature type="active site" evidence="2">
    <location>
        <position position="513"/>
    </location>
</feature>
<feature type="active site" evidence="3">
    <location>
        <position position="561"/>
    </location>
</feature>
<feature type="active site" evidence="3">
    <location>
        <position position="570"/>
    </location>
</feature>
<feature type="glycosylation site" description="N-linked (GlcNAc...) asparagine" evidence="1">
    <location>
        <position position="108"/>
    </location>
</feature>
<feature type="glycosylation site" description="N-linked (GlcNAc...) asparagine" evidence="1">
    <location>
        <position position="133"/>
    </location>
</feature>
<feature type="glycosylation site" description="N-linked (GlcNAc...) asparagine" evidence="1">
    <location>
        <position position="216"/>
    </location>
</feature>
<feature type="glycosylation site" description="N-linked (GlcNAc...) asparagine" evidence="1">
    <location>
        <position position="324"/>
    </location>
</feature>
<feature type="glycosylation site" description="N-linked (GlcNAc...) asparagine" evidence="1">
    <location>
        <position position="345"/>
    </location>
</feature>
<feature type="glycosylation site" description="N-linked (GlcNAc...) asparagine" evidence="1">
    <location>
        <position position="408"/>
    </location>
</feature>
<feature type="glycosylation site" description="N-linked (GlcNAc...) asparagine" evidence="1">
    <location>
        <position position="425"/>
    </location>
</feature>
<feature type="glycosylation site" description="N-linked (GlcNAc...) asparagine" evidence="1">
    <location>
        <position position="567"/>
    </location>
</feature>
<feature type="mutagenesis site" description="Abolishes polarized targeting to cell plate." evidence="6">
    <original>LL</original>
    <variation>AA</variation>
    <location>
        <begin position="48"/>
        <end position="49"/>
    </location>
</feature>
<feature type="mutagenesis site" description="Abolishes polarized targeting to cell plate." evidence="6">
    <original>Y</original>
    <variation>A</variation>
    <location>
        <position position="59"/>
    </location>
</feature>
<feature type="mutagenesis site" description="In rsw2-3; decrease in cellulose production." evidence="7">
    <original>S</original>
    <variation>N</variation>
    <location>
        <position position="183"/>
    </location>
</feature>
<feature type="mutagenesis site" description="In irx2-1; decrease in cellulose production." evidence="8">
    <original>P</original>
    <variation>L</variation>
    <location>
        <position position="250"/>
    </location>
</feature>
<feature type="mutagenesis site" description="In rsw2-4; decrease in cellulose production." evidence="7">
    <original>G</original>
    <variation>R</variation>
    <location>
        <position position="344"/>
    </location>
</feature>
<feature type="mutagenesis site" description="In rsw2-1 and rsw2-2; decrease in cellulose production." evidence="7">
    <original>G</original>
    <variation>R</variation>
    <location>
        <position position="429"/>
    </location>
</feature>
<feature type="mutagenesis site" description="In irx2-2; decrease in cellulose production." evidence="8">
    <original>P</original>
    <variation>L</variation>
    <location>
        <position position="553"/>
    </location>
</feature>
<feature type="sequence conflict" description="In Ref. 7; AAM63370." evidence="12" ref="7">
    <original>W</original>
    <variation>S</variation>
    <location>
        <position position="7"/>
    </location>
</feature>
<feature type="sequence conflict" description="In Ref. 6; AAK59818." evidence="12" ref="6">
    <original>Y</original>
    <variation>D</variation>
    <location>
        <position position="59"/>
    </location>
</feature>
<feature type="sequence conflict" description="In Ref. 7; AAM63370." evidence="12" ref="7">
    <original>W</original>
    <variation>R</variation>
    <location>
        <position position="338"/>
    </location>
</feature>
<feature type="sequence conflict" description="In Ref. 6; AAK59818/AAN72232." evidence="12" ref="6">
    <original>Y</original>
    <variation>C</variation>
    <location>
        <position position="397"/>
    </location>
</feature>
<feature type="sequence conflict" description="In Ref. 8; BAD94393." evidence="12" ref="8">
    <original>V</original>
    <variation>A</variation>
    <location>
        <position position="605"/>
    </location>
</feature>
<protein>
    <recommendedName>
        <fullName>Endoglucanase 25</fullName>
        <ecNumber>3.2.1.4</ecNumber>
    </recommendedName>
    <alternativeName>
        <fullName>Cellulase homolog OR16pep</fullName>
    </alternativeName>
    <alternativeName>
        <fullName>Endo-1,4-beta glucanase 25</fullName>
    </alternativeName>
    <alternativeName>
        <fullName>Protein KORRIGAN</fullName>
    </alternativeName>
    <alternativeName>
        <fullName>Protein RADIALLY SWOLLEN 2</fullName>
    </alternativeName>
</protein>
<dbReference type="EC" id="3.2.1.4"/>
<dbReference type="EMBL" id="U37702">
    <property type="protein sequence ID" value="AAB60304.1"/>
    <property type="molecule type" value="mRNA"/>
</dbReference>
<dbReference type="EMBL" id="AF073875">
    <property type="protein sequence ID" value="AAC83240.1"/>
    <property type="molecule type" value="Genomic_DNA"/>
</dbReference>
<dbReference type="EMBL" id="AF074092">
    <property type="protein sequence ID" value="AAC33467.1"/>
    <property type="molecule type" value="Genomic_DNA"/>
</dbReference>
<dbReference type="EMBL" id="AF074375">
    <property type="protein sequence ID" value="AAC35344.1"/>
    <property type="molecule type" value="mRNA"/>
</dbReference>
<dbReference type="EMBL" id="AB025613">
    <property type="protein sequence ID" value="BAA98160.1"/>
    <property type="molecule type" value="Genomic_DNA"/>
</dbReference>
<dbReference type="EMBL" id="CP002688">
    <property type="protein sequence ID" value="AED95850.1"/>
    <property type="molecule type" value="Genomic_DNA"/>
</dbReference>
<dbReference type="EMBL" id="AY037218">
    <property type="protein sequence ID" value="AAK59818.1"/>
    <property type="molecule type" value="mRNA"/>
</dbReference>
<dbReference type="EMBL" id="BT002221">
    <property type="protein sequence ID" value="AAN72232.1"/>
    <property type="molecule type" value="mRNA"/>
</dbReference>
<dbReference type="EMBL" id="AY086165">
    <property type="protein sequence ID" value="AAM63370.1"/>
    <property type="molecule type" value="mRNA"/>
</dbReference>
<dbReference type="EMBL" id="AK221941">
    <property type="protein sequence ID" value="BAD94393.1"/>
    <property type="molecule type" value="mRNA"/>
</dbReference>
<dbReference type="EMBL" id="AK222193">
    <property type="protein sequence ID" value="BAD95336.1"/>
    <property type="molecule type" value="mRNA"/>
</dbReference>
<dbReference type="PIR" id="S71215">
    <property type="entry name" value="S71215"/>
</dbReference>
<dbReference type="RefSeq" id="NP_199783.1">
    <property type="nucleotide sequence ID" value="NM_124350.3"/>
</dbReference>
<dbReference type="SMR" id="Q38890"/>
<dbReference type="BioGRID" id="20281">
    <property type="interactions" value="8"/>
</dbReference>
<dbReference type="FunCoup" id="Q38890">
    <property type="interactions" value="1225"/>
</dbReference>
<dbReference type="STRING" id="3702.Q38890"/>
<dbReference type="CAZy" id="GH9">
    <property type="family name" value="Glycoside Hydrolase Family 9"/>
</dbReference>
<dbReference type="GlyCosmos" id="Q38890">
    <property type="glycosylation" value="8 sites, No reported glycans"/>
</dbReference>
<dbReference type="GlyGen" id="Q38890">
    <property type="glycosylation" value="9 sites"/>
</dbReference>
<dbReference type="iPTMnet" id="Q38890"/>
<dbReference type="SwissPalm" id="Q38890"/>
<dbReference type="PaxDb" id="3702-AT5G49720.1"/>
<dbReference type="ProteomicsDB" id="247246"/>
<dbReference type="EnsemblPlants" id="AT5G49720.1">
    <property type="protein sequence ID" value="AT5G49720.1"/>
    <property type="gene ID" value="AT5G49720"/>
</dbReference>
<dbReference type="GeneID" id="835035"/>
<dbReference type="Gramene" id="AT5G49720.1">
    <property type="protein sequence ID" value="AT5G49720.1"/>
    <property type="gene ID" value="AT5G49720"/>
</dbReference>
<dbReference type="KEGG" id="ath:AT5G49720"/>
<dbReference type="Araport" id="AT5G49720"/>
<dbReference type="TAIR" id="AT5G49720">
    <property type="gene designation" value="GH9A1"/>
</dbReference>
<dbReference type="eggNOG" id="ENOG502QUUK">
    <property type="taxonomic scope" value="Eukaryota"/>
</dbReference>
<dbReference type="HOGENOM" id="CLU_008926_1_3_1"/>
<dbReference type="InParanoid" id="Q38890"/>
<dbReference type="OMA" id="SHYPKHV"/>
<dbReference type="OrthoDB" id="10257085at2759"/>
<dbReference type="PhylomeDB" id="Q38890"/>
<dbReference type="BioCyc" id="MetaCyc:MONOMER-2367"/>
<dbReference type="PRO" id="PR:Q38890"/>
<dbReference type="Proteomes" id="UP000006548">
    <property type="component" value="Chromosome 5"/>
</dbReference>
<dbReference type="ExpressionAtlas" id="Q38890">
    <property type="expression patterns" value="baseline and differential"/>
</dbReference>
<dbReference type="GO" id="GO:0009504">
    <property type="term" value="C:cell plate"/>
    <property type="evidence" value="ECO:0000314"/>
    <property type="project" value="TAIR"/>
</dbReference>
<dbReference type="GO" id="GO:0005769">
    <property type="term" value="C:early endosome"/>
    <property type="evidence" value="ECO:0000314"/>
    <property type="project" value="TAIR"/>
</dbReference>
<dbReference type="GO" id="GO:0005768">
    <property type="term" value="C:endosome"/>
    <property type="evidence" value="ECO:0007005"/>
    <property type="project" value="TAIR"/>
</dbReference>
<dbReference type="GO" id="GO:0005794">
    <property type="term" value="C:Golgi apparatus"/>
    <property type="evidence" value="ECO:0000314"/>
    <property type="project" value="TAIR"/>
</dbReference>
<dbReference type="GO" id="GO:0005886">
    <property type="term" value="C:plasma membrane"/>
    <property type="evidence" value="ECO:0007005"/>
    <property type="project" value="TAIR"/>
</dbReference>
<dbReference type="GO" id="GO:0005802">
    <property type="term" value="C:trans-Golgi network"/>
    <property type="evidence" value="ECO:0007005"/>
    <property type="project" value="TAIR"/>
</dbReference>
<dbReference type="GO" id="GO:0008810">
    <property type="term" value="F:cellulase activity"/>
    <property type="evidence" value="ECO:0000250"/>
    <property type="project" value="TAIR"/>
</dbReference>
<dbReference type="GO" id="GO:0071555">
    <property type="term" value="P:cell wall organization"/>
    <property type="evidence" value="ECO:0007669"/>
    <property type="project" value="UniProtKB-KW"/>
</dbReference>
<dbReference type="GO" id="GO:0030244">
    <property type="term" value="P:cellulose biosynthetic process"/>
    <property type="evidence" value="ECO:0000315"/>
    <property type="project" value="TAIR"/>
</dbReference>
<dbReference type="GO" id="GO:0030245">
    <property type="term" value="P:cellulose catabolic process"/>
    <property type="evidence" value="ECO:0007669"/>
    <property type="project" value="UniProtKB-KW"/>
</dbReference>
<dbReference type="GO" id="GO:0043622">
    <property type="term" value="P:cortical microtubule organization"/>
    <property type="evidence" value="ECO:0000315"/>
    <property type="project" value="TAIR"/>
</dbReference>
<dbReference type="GO" id="GO:0042538">
    <property type="term" value="P:hyperosmotic salinity response"/>
    <property type="evidence" value="ECO:0000315"/>
    <property type="project" value="TAIR"/>
</dbReference>
<dbReference type="GO" id="GO:0009735">
    <property type="term" value="P:response to cytokinin"/>
    <property type="evidence" value="ECO:0000315"/>
    <property type="project" value="TAIR"/>
</dbReference>
<dbReference type="GO" id="GO:0048367">
    <property type="term" value="P:shoot system development"/>
    <property type="evidence" value="ECO:0000315"/>
    <property type="project" value="TAIR"/>
</dbReference>
<dbReference type="GO" id="GO:0009826">
    <property type="term" value="P:unidimensional cell growth"/>
    <property type="evidence" value="ECO:0000315"/>
    <property type="project" value="TAIR"/>
</dbReference>
<dbReference type="FunFam" id="1.50.10.10:FF:000020">
    <property type="entry name" value="Endoglucanase"/>
    <property type="match status" value="1"/>
</dbReference>
<dbReference type="Gene3D" id="1.50.10.10">
    <property type="match status" value="1"/>
</dbReference>
<dbReference type="InterPro" id="IPR008928">
    <property type="entry name" value="6-hairpin_glycosidase_sf"/>
</dbReference>
<dbReference type="InterPro" id="IPR012341">
    <property type="entry name" value="6hp_glycosidase-like_sf"/>
</dbReference>
<dbReference type="InterPro" id="IPR001701">
    <property type="entry name" value="Glyco_hydro_9"/>
</dbReference>
<dbReference type="InterPro" id="IPR033126">
    <property type="entry name" value="Glyco_hydro_9_Asp/Glu_AS"/>
</dbReference>
<dbReference type="InterPro" id="IPR018221">
    <property type="entry name" value="Glyco_hydro_9_His_AS"/>
</dbReference>
<dbReference type="PANTHER" id="PTHR22298">
    <property type="entry name" value="ENDO-1,4-BETA-GLUCANASE"/>
    <property type="match status" value="1"/>
</dbReference>
<dbReference type="Pfam" id="PF00759">
    <property type="entry name" value="Glyco_hydro_9"/>
    <property type="match status" value="1"/>
</dbReference>
<dbReference type="SUPFAM" id="SSF48208">
    <property type="entry name" value="Six-hairpin glycosidases"/>
    <property type="match status" value="1"/>
</dbReference>
<dbReference type="PROSITE" id="PS60032">
    <property type="entry name" value="GH9_1"/>
    <property type="match status" value="1"/>
</dbReference>
<dbReference type="PROSITE" id="PS00592">
    <property type="entry name" value="GH9_2"/>
    <property type="match status" value="1"/>
</dbReference>
<dbReference type="PROSITE" id="PS00698">
    <property type="entry name" value="GH9_3"/>
    <property type="match status" value="1"/>
</dbReference>
<organism>
    <name type="scientific">Arabidopsis thaliana</name>
    <name type="common">Mouse-ear cress</name>
    <dbReference type="NCBI Taxonomy" id="3702"/>
    <lineage>
        <taxon>Eukaryota</taxon>
        <taxon>Viridiplantae</taxon>
        <taxon>Streptophyta</taxon>
        <taxon>Embryophyta</taxon>
        <taxon>Tracheophyta</taxon>
        <taxon>Spermatophyta</taxon>
        <taxon>Magnoliopsida</taxon>
        <taxon>eudicotyledons</taxon>
        <taxon>Gunneridae</taxon>
        <taxon>Pentapetalae</taxon>
        <taxon>rosids</taxon>
        <taxon>malvids</taxon>
        <taxon>Brassicales</taxon>
        <taxon>Brassicaceae</taxon>
        <taxon>Camelineae</taxon>
        <taxon>Arabidopsis</taxon>
    </lineage>
</organism>
<accession>Q38890</accession>
<accession>Q56W54</accession>
<accession>Q56WU0</accession>
<accession>Q8H0S4</accession>
<accession>Q8LD74</accession>
<accession>Q94C24</accession>
<evidence type="ECO:0000255" key="1"/>
<evidence type="ECO:0000255" key="2">
    <source>
        <dbReference type="PROSITE-ProRule" id="PRU10059"/>
    </source>
</evidence>
<evidence type="ECO:0000255" key="3">
    <source>
        <dbReference type="PROSITE-ProRule" id="PRU10060"/>
    </source>
</evidence>
<evidence type="ECO:0000255" key="4">
    <source>
        <dbReference type="PROSITE-ProRule" id="PRU10140"/>
    </source>
</evidence>
<evidence type="ECO:0000256" key="5">
    <source>
        <dbReference type="SAM" id="MobiDB-lite"/>
    </source>
</evidence>
<evidence type="ECO:0000269" key="6">
    <source>
    </source>
</evidence>
<evidence type="ECO:0000269" key="7">
    <source>
    </source>
</evidence>
<evidence type="ECO:0000269" key="8">
    <source>
    </source>
</evidence>
<evidence type="ECO:0000269" key="9">
    <source>
    </source>
</evidence>
<evidence type="ECO:0000269" key="10">
    <source>
    </source>
</evidence>
<evidence type="ECO:0000269" key="11">
    <source>
    </source>
</evidence>
<evidence type="ECO:0000305" key="12"/>
<sequence>MYGRDPWGGPLEINTADSATDDDRSRNLNDLDRAALSRPLDETQQSWLLGPTEQKKKKYVDLGCIIVSRKIFVWTVGTLVAAALLAGFITLIVKTVPRHHPKTPPPDNYTIALHKALKFFNAQKSGKLPKHNNVSWRGNSGLQDGKGETGSFYKDLVGGYYDAGDAIKFNFPMAYAMTMLSWSVIEYSAKYEAAGELTHVKELIKWGTDYFLKTFNSTADSIDDLVSQVGSGNTDDGNTDPNDHYCWMRPEDMDYKRPVTTCNGGCSDLAAEMAAALASASIVFKDNKEYSKKLVHGAKVVYQFGRTRRGRYSAGTAESSKFYNSSMYWDEFIWGGAWMYYATGNVTYLNLITQPTMAKHAGAFWGGPYYGVFSWDNKLAGAQLLLSRLRLFLSPGYPYEEILRTFHNQTSIVMCSYLPIFNKFNRTNGGLIELNHGAPQPLQYSVNAAFLATLYSDYLDAADTPGWYCGPNFYSTSVLRDFARSQIDYILGKNPRKMSYVVGFGTKYPRHVHHRGASIPKNKVKYNCKGGWKWRDSKKPNPNTIEGAMVAGPDKRDGYRDVRMNYNYTEPTLAGNAGLVAALVALSGEEEATGKIDKNTIFSAVPPLFPTPPPPPAPWKP</sequence>
<gene>
    <name type="primary">KOR</name>
    <name type="synonym">DEC</name>
    <name type="synonym">KOR1</name>
    <name type="synonym">RSW2</name>
    <name type="ordered locus">At5g49720</name>
    <name type="ORF">K2I5.8</name>
</gene>
<reference key="1">
    <citation type="journal article" date="1998" name="DNA Seq.">
        <title>An Arabidopsis thaliana cDNA homologous to cellulase.</title>
        <authorList>
            <person name="Loebler M."/>
        </authorList>
    </citation>
    <scope>NUCLEOTIDE SEQUENCE [MRNA]</scope>
    <source>
        <strain>cv. Columbia</strain>
        <tissue>Leaf</tissue>
    </source>
</reference>
<reference key="2">
    <citation type="journal article" date="1998" name="EMBO J.">
        <title>A plasma membrane-bound putative endo-1,4-beta-D-glucanase is required for normal wall assembly and cell elongation in Arabidopsis.</title>
        <authorList>
            <person name="Nicol F."/>
            <person name="His I."/>
            <person name="Jauneau A."/>
            <person name="Vernhettes S."/>
            <person name="Canut H."/>
            <person name="Hoefte H."/>
        </authorList>
    </citation>
    <scope>NUCLEOTIDE SEQUENCE [GENOMIC DNA]</scope>
    <scope>FUNCTION</scope>
    <scope>SUBCELLULAR LOCATION</scope>
    <scope>TISSUE SPECIFICITY</scope>
    <scope>DEVELOPMENTAL STAGE</scope>
    <scope>DISRUPTION PHENOTYPE</scope>
    <source>
        <strain>cv. Columbia</strain>
    </source>
</reference>
<reference key="3">
    <citation type="journal article" date="2000" name="Plant Cell">
        <title>KORRIGAN, an Arabidopsis endo-1,4-beta-glucanase, localizes to the cell plate by polarized targeting and is essential for cytokinesis.</title>
        <authorList>
            <person name="Zuo J."/>
            <person name="Niu Q.-W."/>
            <person name="Nishizawa N."/>
            <person name="Wu Y."/>
            <person name="Kost B."/>
            <person name="Chua N.-H."/>
        </authorList>
    </citation>
    <scope>NUCLEOTIDE SEQUENCE [GENOMIC DNA / MRNA]</scope>
    <scope>FUNCTION</scope>
    <scope>TISSUE SPECIFICITY</scope>
    <scope>MUTAGENESIS OF 48-LYS-LYS-49 AND TYR-59</scope>
    <source>
        <strain>cv. Landsberg erecta</strain>
    </source>
</reference>
<reference key="4">
    <citation type="submission" date="1999-04" db="EMBL/GenBank/DDBJ databases">
        <title>Structural analysis of Arabidopsis thaliana chromosome 5. XI.</title>
        <authorList>
            <person name="Kaneko T."/>
            <person name="Katoh T."/>
            <person name="Asamizu E."/>
            <person name="Sato S."/>
            <person name="Nakamura Y."/>
            <person name="Kotani H."/>
            <person name="Tabata S."/>
        </authorList>
    </citation>
    <scope>NUCLEOTIDE SEQUENCE [LARGE SCALE GENOMIC DNA]</scope>
    <source>
        <strain>cv. Columbia</strain>
    </source>
</reference>
<reference key="5">
    <citation type="journal article" date="2017" name="Plant J.">
        <title>Araport11: a complete reannotation of the Arabidopsis thaliana reference genome.</title>
        <authorList>
            <person name="Cheng C.Y."/>
            <person name="Krishnakumar V."/>
            <person name="Chan A.P."/>
            <person name="Thibaud-Nissen F."/>
            <person name="Schobel S."/>
            <person name="Town C.D."/>
        </authorList>
    </citation>
    <scope>GENOME REANNOTATION</scope>
    <source>
        <strain>cv. Columbia</strain>
    </source>
</reference>
<reference key="6">
    <citation type="journal article" date="2003" name="Science">
        <title>Empirical analysis of transcriptional activity in the Arabidopsis genome.</title>
        <authorList>
            <person name="Yamada K."/>
            <person name="Lim J."/>
            <person name="Dale J.M."/>
            <person name="Chen H."/>
            <person name="Shinn P."/>
            <person name="Palm C.J."/>
            <person name="Southwick A.M."/>
            <person name="Wu H.C."/>
            <person name="Kim C.J."/>
            <person name="Nguyen M."/>
            <person name="Pham P.K."/>
            <person name="Cheuk R.F."/>
            <person name="Karlin-Newmann G."/>
            <person name="Liu S.X."/>
            <person name="Lam B."/>
            <person name="Sakano H."/>
            <person name="Wu T."/>
            <person name="Yu G."/>
            <person name="Miranda M."/>
            <person name="Quach H.L."/>
            <person name="Tripp M."/>
            <person name="Chang C.H."/>
            <person name="Lee J.M."/>
            <person name="Toriumi M.J."/>
            <person name="Chan M.M."/>
            <person name="Tang C.C."/>
            <person name="Onodera C.S."/>
            <person name="Deng J.M."/>
            <person name="Akiyama K."/>
            <person name="Ansari Y."/>
            <person name="Arakawa T."/>
            <person name="Banh J."/>
            <person name="Banno F."/>
            <person name="Bowser L."/>
            <person name="Brooks S.Y."/>
            <person name="Carninci P."/>
            <person name="Chao Q."/>
            <person name="Choy N."/>
            <person name="Enju A."/>
            <person name="Goldsmith A.D."/>
            <person name="Gurjal M."/>
            <person name="Hansen N.F."/>
            <person name="Hayashizaki Y."/>
            <person name="Johnson-Hopson C."/>
            <person name="Hsuan V.W."/>
            <person name="Iida K."/>
            <person name="Karnes M."/>
            <person name="Khan S."/>
            <person name="Koesema E."/>
            <person name="Ishida J."/>
            <person name="Jiang P.X."/>
            <person name="Jones T."/>
            <person name="Kawai J."/>
            <person name="Kamiya A."/>
            <person name="Meyers C."/>
            <person name="Nakajima M."/>
            <person name="Narusaka M."/>
            <person name="Seki M."/>
            <person name="Sakurai T."/>
            <person name="Satou M."/>
            <person name="Tamse R."/>
            <person name="Vaysberg M."/>
            <person name="Wallender E.K."/>
            <person name="Wong C."/>
            <person name="Yamamura Y."/>
            <person name="Yuan S."/>
            <person name="Shinozaki K."/>
            <person name="Davis R.W."/>
            <person name="Theologis A."/>
            <person name="Ecker J.R."/>
        </authorList>
    </citation>
    <scope>NUCLEOTIDE SEQUENCE [LARGE SCALE MRNA]</scope>
    <source>
        <strain>cv. Columbia</strain>
    </source>
</reference>
<reference key="7">
    <citation type="submission" date="2002-03" db="EMBL/GenBank/DDBJ databases">
        <title>Full-length cDNA from Arabidopsis thaliana.</title>
        <authorList>
            <person name="Brover V.V."/>
            <person name="Troukhan M.E."/>
            <person name="Alexandrov N.A."/>
            <person name="Lu Y.-P."/>
            <person name="Flavell R.B."/>
            <person name="Feldmann K.A."/>
        </authorList>
    </citation>
    <scope>NUCLEOTIDE SEQUENCE [LARGE SCALE MRNA]</scope>
</reference>
<reference key="8">
    <citation type="submission" date="2005-03" db="EMBL/GenBank/DDBJ databases">
        <title>Large-scale analysis of RIKEN Arabidopsis full-length (RAFL) cDNAs.</title>
        <authorList>
            <person name="Totoki Y."/>
            <person name="Seki M."/>
            <person name="Ishida J."/>
            <person name="Nakajima M."/>
            <person name="Enju A."/>
            <person name="Kamiya A."/>
            <person name="Narusaka M."/>
            <person name="Shin-i T."/>
            <person name="Nakagawa M."/>
            <person name="Sakamoto N."/>
            <person name="Oishi K."/>
            <person name="Kohara Y."/>
            <person name="Kobayashi M."/>
            <person name="Toyoda A."/>
            <person name="Sakaki Y."/>
            <person name="Sakurai T."/>
            <person name="Iida K."/>
            <person name="Akiyama K."/>
            <person name="Satou M."/>
            <person name="Toyoda T."/>
            <person name="Konagaya A."/>
            <person name="Carninci P."/>
            <person name="Kawai J."/>
            <person name="Hayashizaki Y."/>
            <person name="Shinozaki K."/>
        </authorList>
    </citation>
    <scope>NUCLEOTIDE SEQUENCE [LARGE SCALE MRNA] OF 366-621</scope>
    <source>
        <strain>cv. Columbia</strain>
    </source>
</reference>
<reference key="9">
    <citation type="journal article" date="2001" name="Plant Physiol.">
        <title>Temperature-sensitive alleles of RSW2 link the KORRIGAN endo-1,4-beta-glucanase to cellulose synthesis and cytokinesis in Arabidopsis.</title>
        <authorList>
            <person name="Lane D.R."/>
            <person name="Wiedemeier A."/>
            <person name="Peng L."/>
            <person name="Hoefte H."/>
            <person name="Vernhettes S."/>
            <person name="Desprez T."/>
            <person name="Hocart C.H."/>
            <person name="Birch R.J."/>
            <person name="Baskin T.I."/>
            <person name="Burn J.E."/>
            <person name="Arioli T."/>
            <person name="Betzner A.S."/>
            <person name="Williamson R.E."/>
        </authorList>
    </citation>
    <scope>FUNCTION</scope>
    <scope>MUTAGENESIS OF SER-183; GLY-344 AND GLY-429</scope>
</reference>
<reference key="10">
    <citation type="journal article" date="2003" name="Mol. Cell. Proteomics">
        <title>Large-scale analysis of in vivo phosphorylated membrane proteins by immobilized metal ion affinity chromatography and mass spectrometry.</title>
        <authorList>
            <person name="Nuehse T.S."/>
            <person name="Stensballe A."/>
            <person name="Jensen O.N."/>
            <person name="Peck S.C."/>
        </authorList>
    </citation>
    <scope>IDENTIFICATION BY MASS SPECTROMETRY [LARGE SCALE ANALYSIS]</scope>
    <source>
        <strain>cv. La-0</strain>
    </source>
</reference>
<reference key="11">
    <citation type="journal article" date="2004" name="J. Mol. Evol.">
        <title>Phylogenetic analysis of the plant endo-beta-1,4-glucanase gene family.</title>
        <authorList>
            <person name="Libertini E."/>
            <person name="Li Y."/>
            <person name="McQueen-Mason S.J."/>
        </authorList>
    </citation>
    <scope>GENE FAMILY</scope>
</reference>
<reference key="12">
    <citation type="journal article" date="2004" name="Plant Cell">
        <title>Phosphoproteomics of the Arabidopsis plasma membrane and a new phosphorylation site database.</title>
        <authorList>
            <person name="Nuehse T.S."/>
            <person name="Stensballe A."/>
            <person name="Jensen O.N."/>
            <person name="Peck S.C."/>
        </authorList>
    </citation>
    <scope>IDENTIFICATION BY MASS SPECTROMETRY [LARGE SCALE ANALYSIS]</scope>
</reference>
<reference key="13">
    <citation type="journal article" date="2004" name="Plant J.">
        <title>The irregular xylem 2 mutant is an allele of korrigan that affects the secondary cell wall of Arabidopsis thaliana.</title>
        <authorList>
            <person name="Szyjanowicz P.M."/>
            <person name="McKinnon I."/>
            <person name="Taylor N.G."/>
            <person name="Gardiner J."/>
            <person name="Jarvis M.C."/>
            <person name="Turner S.R."/>
        </authorList>
    </citation>
    <scope>FUNCTION</scope>
    <scope>TISSUE SPECIFICITY</scope>
    <scope>MUTAGENESIS OF PRO-250 AND PRO-553</scope>
</reference>
<reference key="14">
    <citation type="journal article" date="2005" name="Plant Cell">
        <title>An Arabidopsis endo-1,4-beta-D-glucanase involved in cellulose synthesis undergoes regulated intracellular cycling.</title>
        <authorList>
            <person name="Robert S."/>
            <person name="Bichet A."/>
            <person name="Grandjean O."/>
            <person name="Kierzkowski D."/>
            <person name="Satiat-Jeunemaitre B."/>
            <person name="Pelletier S."/>
            <person name="Hauser M.-T."/>
            <person name="Hoefte H."/>
            <person name="Vernhettes S."/>
        </authorList>
    </citation>
    <scope>FUNCTION</scope>
</reference>
<reference key="15">
    <citation type="journal article" date="2008" name="Proc. Natl. Acad. Sci. U.S.A.">
        <title>Salt tolerance of Arabidopsis thaliana requires maturation of N-glycosylated proteins in the Golgi apparatus.</title>
        <authorList>
            <person name="Kang J.S."/>
            <person name="Frank J."/>
            <person name="Kang C.H."/>
            <person name="Kajiura H."/>
            <person name="Vikram M."/>
            <person name="Ueda A."/>
            <person name="Kim S."/>
            <person name="Bahk J.D."/>
            <person name="Triplett B."/>
            <person name="Fujiyama K."/>
            <person name="Lee S.Y."/>
            <person name="von Schaewen A."/>
            <person name="Koiwa H."/>
        </authorList>
    </citation>
    <scope>GLYCOSYLATION</scope>
</reference>
<keyword id="KW-0119">Carbohydrate metabolism</keyword>
<keyword id="KW-1003">Cell membrane</keyword>
<keyword id="KW-0961">Cell wall biogenesis/degradation</keyword>
<keyword id="KW-0136">Cellulose degradation</keyword>
<keyword id="KW-0325">Glycoprotein</keyword>
<keyword id="KW-0326">Glycosidase</keyword>
<keyword id="KW-0378">Hydrolase</keyword>
<keyword id="KW-0472">Membrane</keyword>
<keyword id="KW-0624">Polysaccharide degradation</keyword>
<keyword id="KW-1185">Reference proteome</keyword>
<keyword id="KW-0735">Signal-anchor</keyword>
<keyword id="KW-0812">Transmembrane</keyword>
<keyword id="KW-1133">Transmembrane helix</keyword>
<comment type="function">
    <text evidence="6 7 8 9 11">Required for cellulose microfibril formation. Involved in cell wall assembly during cell elongation and cell plate maturation in cytokinesis. Required for secondary cell wall formation in the developing xylem. May cycle through different intracellular compartments, including plasma membrane.</text>
</comment>
<comment type="catalytic activity">
    <reaction>
        <text>Endohydrolysis of (1-&gt;4)-beta-D-glucosidic linkages in cellulose, lichenin and cereal beta-D-glucans.</text>
        <dbReference type="EC" id="3.2.1.4"/>
    </reaction>
</comment>
<comment type="subcellular location">
    <subcellularLocation>
        <location evidence="11">Cell membrane</location>
        <topology evidence="11">Single-pass type II membrane protein</topology>
    </subcellularLocation>
    <text>Cell plate.</text>
</comment>
<comment type="tissue specificity">
    <text evidence="6 8 11">Highly expressed in roots and stems, at intermediate levels in leaves and flowers, and at lower levels in siliques. Expressed in xylem (at protein level).</text>
</comment>
<comment type="developmental stage">
    <text evidence="11">Expressed during hypocotyl elongation in the dark.</text>
</comment>
<comment type="PTM">
    <text evidence="10">Glycosylated. N-glycosylation of KOR in the endoplasmic reticulum followed by N-glycan modifications in the Golgi are essential for catalytic activity.</text>
</comment>
<comment type="disruption phenotype">
    <text evidence="11">Plants are extremely dwarf and show severe abnormal morphology with incomplete cell walls, aberrant cell plates and multinucleated cells.</text>
</comment>
<comment type="similarity">
    <text evidence="4 12">Belongs to the glycosyl hydrolase 9 (cellulase E) family.</text>
</comment>
<proteinExistence type="evidence at protein level"/>